<evidence type="ECO:0000250" key="1"/>
<evidence type="ECO:0000305" key="2"/>
<sequence>MTLNLKTPFPTFGGSTGGWLRAAEVEEKYAITWTSAKEQIFEMPTGGSAIMRNGENLLYLARKEQCLALSTQLRTFKINDYKIYRIFPSGEVQYLHPKDGVFPEKVNPGRTSVNSRGFSIGKNPNPASIKFSGITTYES</sequence>
<geneLocation type="chloroplast"/>
<protein>
    <recommendedName>
        <fullName>Photosystem I reaction center subunit II</fullName>
    </recommendedName>
    <alternativeName>
        <fullName>Photosystem I 16 kDa polypeptide</fullName>
        <shortName>PSI-D</shortName>
    </alternativeName>
</protein>
<comment type="function">
    <text>PsaD can form complexes with ferredoxin and ferredoxin-oxidoreductase in photosystem I (PS I) reaction center.</text>
</comment>
<comment type="subcellular location">
    <subcellularLocation>
        <location evidence="1">Plastid</location>
        <location evidence="1">Chloroplast thylakoid membrane</location>
        <topology evidence="1">Peripheral membrane protein</topology>
        <orientation evidence="1">Stromal side</orientation>
    </subcellularLocation>
</comment>
<comment type="similarity">
    <text evidence="2">Belongs to the PsaD family.</text>
</comment>
<keyword id="KW-0150">Chloroplast</keyword>
<keyword id="KW-0472">Membrane</keyword>
<keyword id="KW-0602">Photosynthesis</keyword>
<keyword id="KW-0603">Photosystem I</keyword>
<keyword id="KW-0934">Plastid</keyword>
<keyword id="KW-0793">Thylakoid</keyword>
<feature type="chain" id="PRO_0000206047" description="Photosystem I reaction center subunit II">
    <location>
        <begin position="1"/>
        <end position="139"/>
    </location>
</feature>
<organism>
    <name type="scientific">Skeletonema costatum</name>
    <name type="common">Marine centric diatom</name>
    <name type="synonym">Melosira costata</name>
    <dbReference type="NCBI Taxonomy" id="2843"/>
    <lineage>
        <taxon>Eukaryota</taxon>
        <taxon>Sar</taxon>
        <taxon>Stramenopiles</taxon>
        <taxon>Ochrophyta</taxon>
        <taxon>Bacillariophyta</taxon>
        <taxon>Coscinodiscophyceae</taxon>
        <taxon>Thalassiosirophycidae</taxon>
        <taxon>Thalassiosirales</taxon>
        <taxon>Skeletonemataceae</taxon>
        <taxon>Skeletonema</taxon>
    </lineage>
</organism>
<reference key="1">
    <citation type="journal article" date="1999" name="DNA Seq.">
        <title>Comparison of gene arrangements of chloroplasts between two centric diatoms, Skeletonema costatum and Odontella sinensis.</title>
        <authorList>
            <person name="Tada N."/>
            <person name="Shibata S."/>
            <person name="Otsuka S."/>
            <person name="Namba K."/>
            <person name="Oyaizu H."/>
        </authorList>
    </citation>
    <scope>NUCLEOTIDE SEQUENCE [GENOMIC DNA]</scope>
    <source>
        <strain>NIES-323 / Sk-85w</strain>
    </source>
</reference>
<gene>
    <name type="primary">psaD</name>
</gene>
<accession>O96800</accession>
<name>PSAD_SKECO</name>
<proteinExistence type="inferred from homology"/>
<dbReference type="EMBL" id="AJ132263">
    <property type="protein sequence ID" value="CAA10621.1"/>
    <property type="molecule type" value="Genomic_DNA"/>
</dbReference>
<dbReference type="RefSeq" id="YP_010201191.1">
    <property type="nucleotide sequence ID" value="NC_058703.1"/>
</dbReference>
<dbReference type="SMR" id="O96800"/>
<dbReference type="GeneID" id="68638400"/>
<dbReference type="GO" id="GO:0009535">
    <property type="term" value="C:chloroplast thylakoid membrane"/>
    <property type="evidence" value="ECO:0007669"/>
    <property type="project" value="UniProtKB-SubCell"/>
</dbReference>
<dbReference type="GO" id="GO:0009538">
    <property type="term" value="C:photosystem I reaction center"/>
    <property type="evidence" value="ECO:0007669"/>
    <property type="project" value="InterPro"/>
</dbReference>
<dbReference type="GO" id="GO:0015979">
    <property type="term" value="P:photosynthesis"/>
    <property type="evidence" value="ECO:0007669"/>
    <property type="project" value="UniProtKB-KW"/>
</dbReference>
<dbReference type="Gene3D" id="3.30.1470.10">
    <property type="entry name" value="Photosystem I PsaD, reaction center subunit II"/>
    <property type="match status" value="1"/>
</dbReference>
<dbReference type="InterPro" id="IPR003685">
    <property type="entry name" value="PsaD"/>
</dbReference>
<dbReference type="InterPro" id="IPR036579">
    <property type="entry name" value="PsaD_sf"/>
</dbReference>
<dbReference type="PANTHER" id="PTHR31982:SF5">
    <property type="entry name" value="PHOTOSYSTEM I REACTION CENTER SUBUNIT II, CHLOROPLASTIC"/>
    <property type="match status" value="1"/>
</dbReference>
<dbReference type="PANTHER" id="PTHR31982">
    <property type="entry name" value="PHOTOSYSTEM I REACTION CENTER SUBUNIT II-1, CHLOROPLASTIC-RELATED"/>
    <property type="match status" value="1"/>
</dbReference>
<dbReference type="Pfam" id="PF02531">
    <property type="entry name" value="PsaD"/>
    <property type="match status" value="1"/>
</dbReference>
<dbReference type="SUPFAM" id="SSF64234">
    <property type="entry name" value="Photosystem I subunit PsaD"/>
    <property type="match status" value="1"/>
</dbReference>